<name>PHEG_AGLNE</name>
<protein>
    <recommendedName>
        <fullName>R-phycoerythrin gamma chain, chloroplastic</fullName>
    </recommendedName>
</protein>
<reference key="1">
    <citation type="journal article" date="1993" name="J. Biol. Chem.">
        <title>The gamma subunit of R-phycoerythrin and its possible mode of transport into the plastid of red algae.</title>
        <authorList>
            <person name="Apt K.E."/>
            <person name="Hoffman N.E."/>
            <person name="Grossman A.R."/>
        </authorList>
    </citation>
    <scope>NUCLEOTIDE SEQUENCE [MRNA]</scope>
    <scope>SUBUNIT</scope>
    <scope>PARTIAL PROTEIN SEQUENCE</scope>
</reference>
<keyword id="KW-0042">Antenna complex</keyword>
<keyword id="KW-0089">Bile pigment</keyword>
<keyword id="KW-0150">Chloroplast</keyword>
<keyword id="KW-0157">Chromophore</keyword>
<keyword id="KW-0903">Direct protein sequencing</keyword>
<keyword id="KW-0249">Electron transport</keyword>
<keyword id="KW-0472">Membrane</keyword>
<keyword id="KW-0602">Photosynthesis</keyword>
<keyword id="KW-0605">Phycobilisome</keyword>
<keyword id="KW-0934">Plastid</keyword>
<keyword id="KW-0793">Thylakoid</keyword>
<keyword id="KW-0809">Transit peptide</keyword>
<keyword id="KW-0813">Transport</keyword>
<organism>
    <name type="scientific">Aglaothamnion neglectum</name>
    <name type="common">Red alga</name>
    <dbReference type="NCBI Taxonomy" id="2765"/>
    <lineage>
        <taxon>Eukaryota</taxon>
        <taxon>Rhodophyta</taxon>
        <taxon>Florideophyceae</taxon>
        <taxon>Rhodymeniophycidae</taxon>
        <taxon>Ceramiales</taxon>
        <taxon>Callithamniaceae</taxon>
        <taxon>Aglaothamnion</taxon>
    </lineage>
</organism>
<feature type="transit peptide" description="Chloroplast">
    <location>
        <begin position="1"/>
        <end position="40"/>
    </location>
</feature>
<feature type="chain" id="PRO_0000002829" description="R-phycoerythrin gamma chain, chloroplastic">
    <location>
        <begin position="41"/>
        <end position="317"/>
    </location>
</feature>
<feature type="binding site" description="covalent" evidence="1">
    <location>
        <position position="94"/>
    </location>
    <ligand>
        <name>phycourobilin</name>
        <dbReference type="ChEBI" id="CHEBI:189062"/>
        <label>1</label>
    </ligand>
</feature>
<feature type="binding site" description="covalent" evidence="1">
    <location>
        <position position="133"/>
    </location>
    <ligand>
        <name>phycourobilin</name>
        <dbReference type="ChEBI" id="CHEBI:189062"/>
        <label>2</label>
    </ligand>
</feature>
<feature type="binding site" description="covalent" evidence="1">
    <location>
        <position position="210"/>
    </location>
    <ligand>
        <name>(2R,3E)-phycoerythrobilin</name>
        <dbReference type="ChEBI" id="CHEBI:85276"/>
    </ligand>
</feature>
<feature type="binding site" description="covalent" evidence="1">
    <location>
        <position position="297"/>
    </location>
    <ligand>
        <name>phycourobilin</name>
        <dbReference type="ChEBI" id="CHEBI:189062"/>
        <label>3</label>
    </ligand>
</feature>
<proteinExistence type="evidence at protein level"/>
<evidence type="ECO:0000250" key="1"/>
<evidence type="ECO:0000269" key="2">
    <source>
    </source>
</evidence>
<dbReference type="EMBL" id="L13695">
    <property type="protein sequence ID" value="AAA32635.1"/>
    <property type="molecule type" value="mRNA"/>
</dbReference>
<dbReference type="PIR" id="A47336">
    <property type="entry name" value="A47336"/>
</dbReference>
<dbReference type="SMR" id="P34784"/>
<dbReference type="GO" id="GO:0009535">
    <property type="term" value="C:chloroplast thylakoid membrane"/>
    <property type="evidence" value="ECO:0007669"/>
    <property type="project" value="UniProtKB-SubCell"/>
</dbReference>
<dbReference type="GO" id="GO:0030089">
    <property type="term" value="C:phycobilisome"/>
    <property type="evidence" value="ECO:0007669"/>
    <property type="project" value="UniProtKB-KW"/>
</dbReference>
<dbReference type="GO" id="GO:0015979">
    <property type="term" value="P:photosynthesis"/>
    <property type="evidence" value="ECO:0007669"/>
    <property type="project" value="UniProtKB-KW"/>
</dbReference>
<accession>P34784</accession>
<sequence length="317" mass="34641">MASPAFAVNGMFTPVKLSGSFTASMPVDSKPAASATGVRMVVDPLQRKYQSIGKIGVDYSRPKKLATYVRSGYSVGMEFPNTPSMAGHYSLTDCDKAGGAAKILMKYDEYCAKGMLQVGKRAACRTGVYTTKCTEGTQPQMAFDVRVFNRTQAFRQAQKPVAARLREQYEARKACFVLAHNCSREEAQFKEMPMSCATFLASKMEATGACYRTVRPTSVAEDYMAGSVRAQLYTKLNPKGVYGVGACEDGHAKGDADQRRVIALASEYRAAAQSPSTVTGQQYKSAQLATQLFAHDCHHEQEQIYEYPAVAAAMCRY</sequence>
<comment type="function">
    <text>Critical for the incorporation of phycoerythrin in the phycobilisome complex.</text>
</comment>
<comment type="subunit">
    <text evidence="2">Heteromer of 1 alpha, 1 beta and 2 gamma chains.</text>
</comment>
<comment type="subcellular location">
    <subcellularLocation>
        <location>Plastid</location>
        <location>Chloroplast thylakoid membrane</location>
        <topology>Peripheral membrane protein</topology>
        <orientation>Stromal side</orientation>
    </subcellularLocation>
    <text evidence="1">Forms the periphery of the phycobilisome rod.</text>
</comment>
<comment type="PTM">
    <text>Contains four covalently linked bilin chromophores.</text>
</comment>